<proteinExistence type="inferred from homology"/>
<accession>Q6MD31</accession>
<sequence length="387" mass="43405">MFYSFCKVGQYMTYFKFELIHRSKKSRARVGRIHTPHGIIDTPNFVAVGTNGTVKALNNTMLHDIGLQLMFCNTYHMMLQPGTDIVRQAGGLHSFIQRKLPIITDSGGFQVFSLAYGSVADELKSRGTKKQGGCVLKITEEGVLFRSYRDGSKVLLTPESSIKAQKDLGADIIIPFDELPPYHIARDALKKSLDRTHRWEKRSLEAHLKNPQEQAMYAVVHGGIDPDLRKESCAILTELPFDGFAVGGSMGKTKDEMHTLLSLTLPLLPEDKPNHLLGIGDLPSIERSVPLGIDTFDSSYPTRAARHGILLTKQGPLNITKSEYATNFNSIEKGCLCPACHHFSLAYIHHLFKARELTCMSLATVHNLYFMVQLMEKYRKQIQEDLI</sequence>
<keyword id="KW-0328">Glycosyltransferase</keyword>
<keyword id="KW-0479">Metal-binding</keyword>
<keyword id="KW-0671">Queuosine biosynthesis</keyword>
<keyword id="KW-1185">Reference proteome</keyword>
<keyword id="KW-0808">Transferase</keyword>
<keyword id="KW-0819">tRNA processing</keyword>
<keyword id="KW-0862">Zinc</keyword>
<dbReference type="EC" id="2.4.2.29" evidence="1"/>
<dbReference type="EMBL" id="BX908798">
    <property type="protein sequence ID" value="CAF23518.1"/>
    <property type="molecule type" value="Genomic_DNA"/>
</dbReference>
<dbReference type="SMR" id="Q6MD31"/>
<dbReference type="STRING" id="264201.pc0794"/>
<dbReference type="eggNOG" id="COG0343">
    <property type="taxonomic scope" value="Bacteria"/>
</dbReference>
<dbReference type="HOGENOM" id="CLU_022060_0_2_0"/>
<dbReference type="UniPathway" id="UPA00392"/>
<dbReference type="Proteomes" id="UP000000529">
    <property type="component" value="Chromosome"/>
</dbReference>
<dbReference type="GO" id="GO:0046872">
    <property type="term" value="F:metal ion binding"/>
    <property type="evidence" value="ECO:0007669"/>
    <property type="project" value="UniProtKB-KW"/>
</dbReference>
<dbReference type="GO" id="GO:0008479">
    <property type="term" value="F:tRNA-guanosine(34) queuine transglycosylase activity"/>
    <property type="evidence" value="ECO:0007669"/>
    <property type="project" value="UniProtKB-UniRule"/>
</dbReference>
<dbReference type="GO" id="GO:0008616">
    <property type="term" value="P:queuosine biosynthetic process"/>
    <property type="evidence" value="ECO:0007669"/>
    <property type="project" value="UniProtKB-UniRule"/>
</dbReference>
<dbReference type="GO" id="GO:0101030">
    <property type="term" value="P:tRNA-guanine transglycosylation"/>
    <property type="evidence" value="ECO:0007669"/>
    <property type="project" value="InterPro"/>
</dbReference>
<dbReference type="Gene3D" id="3.20.20.105">
    <property type="entry name" value="Queuine tRNA-ribosyltransferase-like"/>
    <property type="match status" value="1"/>
</dbReference>
<dbReference type="HAMAP" id="MF_00168">
    <property type="entry name" value="Q_tRNA_Tgt"/>
    <property type="match status" value="1"/>
</dbReference>
<dbReference type="InterPro" id="IPR004803">
    <property type="entry name" value="TGT"/>
</dbReference>
<dbReference type="InterPro" id="IPR036511">
    <property type="entry name" value="TGT-like_sf"/>
</dbReference>
<dbReference type="InterPro" id="IPR002616">
    <property type="entry name" value="tRNA_ribo_trans-like"/>
</dbReference>
<dbReference type="NCBIfam" id="TIGR00430">
    <property type="entry name" value="Q_tRNA_tgt"/>
    <property type="match status" value="1"/>
</dbReference>
<dbReference type="NCBIfam" id="TIGR00449">
    <property type="entry name" value="tgt_general"/>
    <property type="match status" value="1"/>
</dbReference>
<dbReference type="PANTHER" id="PTHR43468">
    <property type="match status" value="1"/>
</dbReference>
<dbReference type="PANTHER" id="PTHR43468:SF1">
    <property type="entry name" value="TRNA-GUANOSINE(34) QUEUINE TRANSGLYCOSYLASE"/>
    <property type="match status" value="1"/>
</dbReference>
<dbReference type="Pfam" id="PF01702">
    <property type="entry name" value="TGT"/>
    <property type="match status" value="1"/>
</dbReference>
<dbReference type="SUPFAM" id="SSF51713">
    <property type="entry name" value="tRNA-guanine transglycosylase"/>
    <property type="match status" value="1"/>
</dbReference>
<gene>
    <name evidence="1" type="primary">tgt</name>
    <name type="ordered locus">pc0794</name>
</gene>
<evidence type="ECO:0000255" key="1">
    <source>
        <dbReference type="HAMAP-Rule" id="MF_00168"/>
    </source>
</evidence>
<feature type="chain" id="PRO_0000135499" description="Queuine tRNA-ribosyltransferase">
    <location>
        <begin position="1"/>
        <end position="387"/>
    </location>
</feature>
<feature type="region of interest" description="RNA binding" evidence="1">
    <location>
        <begin position="278"/>
        <end position="284"/>
    </location>
</feature>
<feature type="region of interest" description="RNA binding; important for wobble base 34 recognition" evidence="1">
    <location>
        <begin position="302"/>
        <end position="306"/>
    </location>
</feature>
<feature type="active site" description="Proton acceptor" evidence="1">
    <location>
        <position position="105"/>
    </location>
</feature>
<feature type="active site" description="Nucleophile" evidence="1">
    <location>
        <position position="297"/>
    </location>
</feature>
<feature type="binding site" evidence="1">
    <location>
        <begin position="105"/>
        <end position="109"/>
    </location>
    <ligand>
        <name>substrate</name>
    </ligand>
</feature>
<feature type="binding site" evidence="1">
    <location>
        <position position="177"/>
    </location>
    <ligand>
        <name>substrate</name>
    </ligand>
</feature>
<feature type="binding site" evidence="1">
    <location>
        <position position="248"/>
    </location>
    <ligand>
        <name>substrate</name>
    </ligand>
</feature>
<feature type="binding site" evidence="1">
    <location>
        <position position="335"/>
    </location>
    <ligand>
        <name>Zn(2+)</name>
        <dbReference type="ChEBI" id="CHEBI:29105"/>
    </ligand>
</feature>
<feature type="binding site" evidence="1">
    <location>
        <position position="337"/>
    </location>
    <ligand>
        <name>Zn(2+)</name>
        <dbReference type="ChEBI" id="CHEBI:29105"/>
    </ligand>
</feature>
<feature type="binding site" evidence="1">
    <location>
        <position position="340"/>
    </location>
    <ligand>
        <name>Zn(2+)</name>
        <dbReference type="ChEBI" id="CHEBI:29105"/>
    </ligand>
</feature>
<feature type="binding site" evidence="1">
    <location>
        <position position="366"/>
    </location>
    <ligand>
        <name>Zn(2+)</name>
        <dbReference type="ChEBI" id="CHEBI:29105"/>
    </ligand>
</feature>
<comment type="function">
    <text evidence="1">Catalyzes the base-exchange of a guanine (G) residue with the queuine precursor 7-aminomethyl-7-deazaguanine (PreQ1) at position 34 (anticodon wobble position) in tRNAs with GU(N) anticodons (tRNA-Asp, -Asn, -His and -Tyr). Catalysis occurs through a double-displacement mechanism. The nucleophile active site attacks the C1' of nucleotide 34 to detach the guanine base from the RNA, forming a covalent enzyme-RNA intermediate. The proton acceptor active site deprotonates the incoming PreQ1, allowing a nucleophilic attack on the C1' of the ribose to form the product. After dissociation, two additional enzymatic reactions on the tRNA convert PreQ1 to queuine (Q), resulting in the hypermodified nucleoside queuosine (7-(((4,5-cis-dihydroxy-2-cyclopenten-1-yl)amino)methyl)-7-deazaguanosine).</text>
</comment>
<comment type="catalytic activity">
    <reaction evidence="1">
        <text>7-aminomethyl-7-carbaguanine + guanosine(34) in tRNA = 7-aminomethyl-7-carbaguanosine(34) in tRNA + guanine</text>
        <dbReference type="Rhea" id="RHEA:24104"/>
        <dbReference type="Rhea" id="RHEA-COMP:10341"/>
        <dbReference type="Rhea" id="RHEA-COMP:10342"/>
        <dbReference type="ChEBI" id="CHEBI:16235"/>
        <dbReference type="ChEBI" id="CHEBI:58703"/>
        <dbReference type="ChEBI" id="CHEBI:74269"/>
        <dbReference type="ChEBI" id="CHEBI:82833"/>
        <dbReference type="EC" id="2.4.2.29"/>
    </reaction>
</comment>
<comment type="cofactor">
    <cofactor evidence="1">
        <name>Zn(2+)</name>
        <dbReference type="ChEBI" id="CHEBI:29105"/>
    </cofactor>
    <text evidence="1">Binds 1 zinc ion per subunit.</text>
</comment>
<comment type="pathway">
    <text evidence="1">tRNA modification; tRNA-queuosine biosynthesis.</text>
</comment>
<comment type="subunit">
    <text evidence="1">Homodimer. Within each dimer, one monomer is responsible for RNA recognition and catalysis, while the other monomer binds to the replacement base PreQ1.</text>
</comment>
<comment type="similarity">
    <text evidence="1">Belongs to the queuine tRNA-ribosyltransferase family.</text>
</comment>
<reference key="1">
    <citation type="journal article" date="2004" name="Science">
        <title>Illuminating the evolutionary history of chlamydiae.</title>
        <authorList>
            <person name="Horn M."/>
            <person name="Collingro A."/>
            <person name="Schmitz-Esser S."/>
            <person name="Beier C.L."/>
            <person name="Purkhold U."/>
            <person name="Fartmann B."/>
            <person name="Brandt P."/>
            <person name="Nyakatura G.J."/>
            <person name="Droege M."/>
            <person name="Frishman D."/>
            <person name="Rattei T."/>
            <person name="Mewes H.-W."/>
            <person name="Wagner M."/>
        </authorList>
    </citation>
    <scope>NUCLEOTIDE SEQUENCE [LARGE SCALE GENOMIC DNA]</scope>
    <source>
        <strain>UWE25</strain>
    </source>
</reference>
<name>TGT_PARUW</name>
<protein>
    <recommendedName>
        <fullName evidence="1">Queuine tRNA-ribosyltransferase</fullName>
        <ecNumber evidence="1">2.4.2.29</ecNumber>
    </recommendedName>
    <alternativeName>
        <fullName evidence="1">Guanine insertion enzyme</fullName>
    </alternativeName>
    <alternativeName>
        <fullName evidence="1">tRNA-guanine transglycosylase</fullName>
    </alternativeName>
</protein>
<organism>
    <name type="scientific">Protochlamydia amoebophila (strain UWE25)</name>
    <dbReference type="NCBI Taxonomy" id="264201"/>
    <lineage>
        <taxon>Bacteria</taxon>
        <taxon>Pseudomonadati</taxon>
        <taxon>Chlamydiota</taxon>
        <taxon>Chlamydiia</taxon>
        <taxon>Parachlamydiales</taxon>
        <taxon>Parachlamydiaceae</taxon>
        <taxon>Candidatus Protochlamydia</taxon>
    </lineage>
</organism>